<name>ATG5_ARATH</name>
<gene>
    <name evidence="8" type="primary">ATG5</name>
    <name evidence="7" type="synonym">APG5</name>
    <name type="ordered locus">At5g17290</name>
    <name type="ORF">MKP11_14</name>
</gene>
<reference key="1">
    <citation type="journal article" date="1997" name="DNA Res.">
        <title>Structural analysis of Arabidopsis thaliana chromosome 5. I. Sequence features of the 1.6 Mb regions covered by twenty physically assigned P1 clones.</title>
        <authorList>
            <person name="Sato S."/>
            <person name="Kotani H."/>
            <person name="Nakamura Y."/>
            <person name="Kaneko T."/>
            <person name="Asamizu E."/>
            <person name="Fukami M."/>
            <person name="Miyajima N."/>
            <person name="Tabata S."/>
        </authorList>
    </citation>
    <scope>NUCLEOTIDE SEQUENCE [LARGE SCALE GENOMIC DNA]</scope>
    <source>
        <strain>cv. Columbia</strain>
    </source>
</reference>
<reference key="2">
    <citation type="journal article" date="2017" name="Plant J.">
        <title>Araport11: a complete reannotation of the Arabidopsis thaliana reference genome.</title>
        <authorList>
            <person name="Cheng C.Y."/>
            <person name="Krishnakumar V."/>
            <person name="Chan A.P."/>
            <person name="Thibaud-Nissen F."/>
            <person name="Schobel S."/>
            <person name="Town C.D."/>
        </authorList>
    </citation>
    <scope>GENOME REANNOTATION</scope>
    <source>
        <strain>cv. Columbia</strain>
    </source>
</reference>
<reference key="3">
    <citation type="journal article" date="2002" name="Science">
        <title>Functional annotation of a full-length Arabidopsis cDNA collection.</title>
        <authorList>
            <person name="Seki M."/>
            <person name="Narusaka M."/>
            <person name="Kamiya A."/>
            <person name="Ishida J."/>
            <person name="Satou M."/>
            <person name="Sakurai T."/>
            <person name="Nakajima M."/>
            <person name="Enju A."/>
            <person name="Akiyama K."/>
            <person name="Oono Y."/>
            <person name="Muramatsu M."/>
            <person name="Hayashizaki Y."/>
            <person name="Kawai J."/>
            <person name="Carninci P."/>
            <person name="Itoh M."/>
            <person name="Ishii Y."/>
            <person name="Arakawa T."/>
            <person name="Shibata K."/>
            <person name="Shinagawa A."/>
            <person name="Shinozaki K."/>
        </authorList>
    </citation>
    <scope>NUCLEOTIDE SEQUENCE [LARGE SCALE MRNA]</scope>
    <source>
        <strain>cv. Columbia</strain>
    </source>
</reference>
<reference key="4">
    <citation type="journal article" date="2003" name="Science">
        <title>Empirical analysis of transcriptional activity in the Arabidopsis genome.</title>
        <authorList>
            <person name="Yamada K."/>
            <person name="Lim J."/>
            <person name="Dale J.M."/>
            <person name="Chen H."/>
            <person name="Shinn P."/>
            <person name="Palm C.J."/>
            <person name="Southwick A.M."/>
            <person name="Wu H.C."/>
            <person name="Kim C.J."/>
            <person name="Nguyen M."/>
            <person name="Pham P.K."/>
            <person name="Cheuk R.F."/>
            <person name="Karlin-Newmann G."/>
            <person name="Liu S.X."/>
            <person name="Lam B."/>
            <person name="Sakano H."/>
            <person name="Wu T."/>
            <person name="Yu G."/>
            <person name="Miranda M."/>
            <person name="Quach H.L."/>
            <person name="Tripp M."/>
            <person name="Chang C.H."/>
            <person name="Lee J.M."/>
            <person name="Toriumi M.J."/>
            <person name="Chan M.M."/>
            <person name="Tang C.C."/>
            <person name="Onodera C.S."/>
            <person name="Deng J.M."/>
            <person name="Akiyama K."/>
            <person name="Ansari Y."/>
            <person name="Arakawa T."/>
            <person name="Banh J."/>
            <person name="Banno F."/>
            <person name="Bowser L."/>
            <person name="Brooks S.Y."/>
            <person name="Carninci P."/>
            <person name="Chao Q."/>
            <person name="Choy N."/>
            <person name="Enju A."/>
            <person name="Goldsmith A.D."/>
            <person name="Gurjal M."/>
            <person name="Hansen N.F."/>
            <person name="Hayashizaki Y."/>
            <person name="Johnson-Hopson C."/>
            <person name="Hsuan V.W."/>
            <person name="Iida K."/>
            <person name="Karnes M."/>
            <person name="Khan S."/>
            <person name="Koesema E."/>
            <person name="Ishida J."/>
            <person name="Jiang P.X."/>
            <person name="Jones T."/>
            <person name="Kawai J."/>
            <person name="Kamiya A."/>
            <person name="Meyers C."/>
            <person name="Nakajima M."/>
            <person name="Narusaka M."/>
            <person name="Seki M."/>
            <person name="Sakurai T."/>
            <person name="Satou M."/>
            <person name="Tamse R."/>
            <person name="Vaysberg M."/>
            <person name="Wallender E.K."/>
            <person name="Wong C."/>
            <person name="Yamamura Y."/>
            <person name="Yuan S."/>
            <person name="Shinozaki K."/>
            <person name="Davis R.W."/>
            <person name="Theologis A."/>
            <person name="Ecker J.R."/>
        </authorList>
    </citation>
    <scope>NUCLEOTIDE SEQUENCE [LARGE SCALE MRNA]</scope>
    <source>
        <strain>cv. Columbia</strain>
    </source>
</reference>
<reference key="5">
    <citation type="journal article" date="2002" name="Plant Physiol.">
        <title>Leaf senescence and starvation-induced chlorosis are accelerated by the disruption of an Arabidopsis autophagy gene.</title>
        <authorList>
            <person name="Hanaoka H."/>
            <person name="Noda T."/>
            <person name="Shirano Y."/>
            <person name="Kato T."/>
            <person name="Hayashi H."/>
            <person name="Shibata D."/>
            <person name="Tabata S."/>
            <person name="Ohsumi Y."/>
        </authorList>
    </citation>
    <scope>NOMENCLATURE</scope>
    <scope>GENE FAMILY</scope>
</reference>
<reference key="6">
    <citation type="journal article" date="2005" name="Plant Physiol.">
        <title>Autophagic nutrient recycling in Arabidopsis directed by the ATG8 and ATG12 conjugation pathways.</title>
        <authorList>
            <person name="Thompson A.R."/>
            <person name="Doelling J.H."/>
            <person name="Suttangkakul A."/>
            <person name="Vierstra R.D."/>
        </authorList>
    </citation>
    <scope>FUNCTION</scope>
    <scope>TISSUE SPECIFICITY</scope>
    <scope>DISRUPTION PHENOTYPE</scope>
</reference>
<reference key="7">
    <citation type="journal article" date="2009" name="Plant Cell">
        <title>Autophagy negatively regulates cell death by controlling NPR1-dependent salicylic acid signaling during senescence and the innate immune response in Arabidopsis.</title>
        <authorList>
            <person name="Yoshimoto K."/>
            <person name="Jikumaru Y."/>
            <person name="Kamiya Y."/>
            <person name="Kusano M."/>
            <person name="Consonni C."/>
            <person name="Panstruga R."/>
            <person name="Ohsumi Y."/>
            <person name="Shirasu K."/>
        </authorList>
    </citation>
    <scope>FUNCTION</scope>
    <scope>DISRUPTION PHENOTYPE</scope>
</reference>
<reference key="8">
    <citation type="journal article" date="2013" name="BMC Res. Notes">
        <title>Stromal protein degradation is incomplete in Arabidopsis thaliana autophagy mutants undergoing natural senescence.</title>
        <authorList>
            <person name="Lee T.A."/>
            <person name="Vande Wetering S.W."/>
            <person name="Brusslan J.A."/>
        </authorList>
    </citation>
    <scope>FUNCTION</scope>
</reference>
<reference key="9">
    <citation type="journal article" date="2014" name="J. Cell Sci.">
        <title>Organ-specific quality control of plant peroxisomes is mediated by autophagy.</title>
        <authorList>
            <person name="Yoshimoto K."/>
            <person name="Shibata M."/>
            <person name="Kondo M."/>
            <person name="Oikawa K."/>
            <person name="Sato M."/>
            <person name="Toyooka K."/>
            <person name="Shirasu K."/>
            <person name="Nishimura M."/>
            <person name="Ohsumi Y."/>
        </authorList>
    </citation>
    <scope>FUNCTION</scope>
    <scope>DISRUPTION PHENOTYPE</scope>
</reference>
<comment type="function">
    <text evidence="3 4 5 6">Required for autophagy. Conjugation to ATG12 is essential for plant nutrient recycling (PubMed:16040659). Involved in a negative feedback loop that modulates NPR1-dependent salicylic acid (SA) signaling and limits senescence and immunity-related programmed cell death (PCD) in plants (PubMed:19773385). Involved in complete proteolysis of chloroplast stroma proteins in senescent leaves (PubMed:23327451). Involved in the degradation of damaged peroxisomes (PubMed:24463818).</text>
</comment>
<comment type="subunit">
    <text evidence="1">Conjugated to ATG12.</text>
</comment>
<comment type="subcellular location">
    <subcellularLocation>
        <location evidence="1">Cytoplasm</location>
    </subcellularLocation>
</comment>
<comment type="tissue specificity">
    <text evidence="3">Ubiquitous.</text>
</comment>
<comment type="PTM">
    <text evidence="1">Conjugated to ATG12; which is essential for autophagy. Conjugation with ATG12 involves ATG7 as an E1-like activating enzyme and ATG10 as an E2-like conjugating enzyme (By similarity).</text>
</comment>
<comment type="disruption phenotype">
    <text evidence="3 4 6">Mutant plants are hypersensitive to nitrogen or carbon starvation (PubMed:16040659). Early senescence phenotype (PubMed:16040659, PubMed:19773385). Hyper accumulation of salicylic acid (SA) (PubMed:19773385). Increased number of peroxisomes and accumulation of peroxisomal proteins (PubMed:24463818).</text>
</comment>
<comment type="similarity">
    <text evidence="9">Belongs to the ATG5 family.</text>
</comment>
<protein>
    <recommendedName>
        <fullName evidence="9">Autophagy protein 5</fullName>
    </recommendedName>
    <alternativeName>
        <fullName evidence="9">Protein autophagy 5</fullName>
        <shortName evidence="7">AtAPG5</shortName>
    </alternativeName>
</protein>
<feature type="chain" id="PRO_0000250585" description="Autophagy protein 5">
    <location>
        <begin position="1"/>
        <end position="337"/>
    </location>
</feature>
<feature type="region of interest" description="Disordered" evidence="2">
    <location>
        <begin position="271"/>
        <end position="290"/>
    </location>
</feature>
<feature type="compositionally biased region" description="Basic and acidic residues" evidence="2">
    <location>
        <begin position="276"/>
        <end position="290"/>
    </location>
</feature>
<feature type="cross-link" description="Glycyl lysine isopeptide (Lys-Gly) (interchain with G-Cter in ATG12)" evidence="1">
    <location>
        <position position="128"/>
    </location>
</feature>
<evidence type="ECO:0000250" key="1"/>
<evidence type="ECO:0000256" key="2">
    <source>
        <dbReference type="SAM" id="MobiDB-lite"/>
    </source>
</evidence>
<evidence type="ECO:0000269" key="3">
    <source>
    </source>
</evidence>
<evidence type="ECO:0000269" key="4">
    <source>
    </source>
</evidence>
<evidence type="ECO:0000269" key="5">
    <source>
    </source>
</evidence>
<evidence type="ECO:0000269" key="6">
    <source>
    </source>
</evidence>
<evidence type="ECO:0000303" key="7">
    <source>
    </source>
</evidence>
<evidence type="ECO:0000303" key="8">
    <source>
    </source>
</evidence>
<evidence type="ECO:0000305" key="9"/>
<dbReference type="EMBL" id="AB005238">
    <property type="protein sequence ID" value="BAB10516.1"/>
    <property type="molecule type" value="Genomic_DNA"/>
</dbReference>
<dbReference type="EMBL" id="CP002688">
    <property type="protein sequence ID" value="AED92409.1"/>
    <property type="molecule type" value="Genomic_DNA"/>
</dbReference>
<dbReference type="EMBL" id="AK117572">
    <property type="protein sequence ID" value="BAC42232.1"/>
    <property type="molecule type" value="mRNA"/>
</dbReference>
<dbReference type="EMBL" id="BT005100">
    <property type="protein sequence ID" value="AAO50633.1"/>
    <property type="molecule type" value="mRNA"/>
</dbReference>
<dbReference type="RefSeq" id="NP_197231.1">
    <property type="nucleotide sequence ID" value="NM_121735.5"/>
</dbReference>
<dbReference type="SMR" id="Q9FFI2"/>
<dbReference type="BioGRID" id="16870">
    <property type="interactions" value="2"/>
</dbReference>
<dbReference type="FunCoup" id="Q9FFI2">
    <property type="interactions" value="3294"/>
</dbReference>
<dbReference type="IntAct" id="Q9FFI2">
    <property type="interactions" value="1"/>
</dbReference>
<dbReference type="STRING" id="3702.Q9FFI2"/>
<dbReference type="TCDB" id="9.A.15.3.1">
    <property type="family name" value="the autophagy-related phagophore-formation transporter (apt) family"/>
</dbReference>
<dbReference type="PaxDb" id="3702-AT5G17290.1"/>
<dbReference type="ProteomicsDB" id="246738"/>
<dbReference type="EnsemblPlants" id="AT5G17290.1">
    <property type="protein sequence ID" value="AT5G17290.1"/>
    <property type="gene ID" value="AT5G17290"/>
</dbReference>
<dbReference type="GeneID" id="831594"/>
<dbReference type="Gramene" id="AT5G17290.1">
    <property type="protein sequence ID" value="AT5G17290.1"/>
    <property type="gene ID" value="AT5G17290"/>
</dbReference>
<dbReference type="KEGG" id="ath:AT5G17290"/>
<dbReference type="Araport" id="AT5G17290"/>
<dbReference type="TAIR" id="AT5G17290">
    <property type="gene designation" value="APG5"/>
</dbReference>
<dbReference type="eggNOG" id="KOG2976">
    <property type="taxonomic scope" value="Eukaryota"/>
</dbReference>
<dbReference type="HOGENOM" id="CLU_051894_0_0_1"/>
<dbReference type="InParanoid" id="Q9FFI2"/>
<dbReference type="OMA" id="FPLKWYI"/>
<dbReference type="PhylomeDB" id="Q9FFI2"/>
<dbReference type="PRO" id="PR:Q9FFI2"/>
<dbReference type="Proteomes" id="UP000006548">
    <property type="component" value="Chromosome 5"/>
</dbReference>
<dbReference type="ExpressionAtlas" id="Q9FFI2">
    <property type="expression patterns" value="baseline and differential"/>
</dbReference>
<dbReference type="GO" id="GO:0005737">
    <property type="term" value="C:cytoplasm"/>
    <property type="evidence" value="ECO:0007669"/>
    <property type="project" value="UniProtKB-SubCell"/>
</dbReference>
<dbReference type="GO" id="GO:0006914">
    <property type="term" value="P:autophagy"/>
    <property type="evidence" value="ECO:0000315"/>
    <property type="project" value="TAIR"/>
</dbReference>
<dbReference type="GO" id="GO:0050832">
    <property type="term" value="P:defense response to fungus"/>
    <property type="evidence" value="ECO:0000270"/>
    <property type="project" value="TAIR"/>
</dbReference>
<dbReference type="GO" id="GO:0010150">
    <property type="term" value="P:leaf senescence"/>
    <property type="evidence" value="ECO:0000315"/>
    <property type="project" value="TAIR"/>
</dbReference>
<dbReference type="GO" id="GO:0015031">
    <property type="term" value="P:protein transport"/>
    <property type="evidence" value="ECO:0007669"/>
    <property type="project" value="UniProtKB-KW"/>
</dbReference>
<dbReference type="GO" id="GO:0042594">
    <property type="term" value="P:response to starvation"/>
    <property type="evidence" value="ECO:0000315"/>
    <property type="project" value="TAIR"/>
</dbReference>
<dbReference type="FunFam" id="1.10.246.190:FF:000002">
    <property type="entry name" value="Autophagy protein 5"/>
    <property type="match status" value="1"/>
</dbReference>
<dbReference type="FunFam" id="3.10.20.620:FF:000002">
    <property type="entry name" value="Autophagy protein 5"/>
    <property type="match status" value="1"/>
</dbReference>
<dbReference type="FunFam" id="3.10.20.90:FF:000370">
    <property type="entry name" value="Autophagy protein 5"/>
    <property type="match status" value="1"/>
</dbReference>
<dbReference type="Gene3D" id="3.10.20.620">
    <property type="match status" value="1"/>
</dbReference>
<dbReference type="Gene3D" id="1.10.246.190">
    <property type="entry name" value="Autophagy protein Apg5, helix rich domain"/>
    <property type="match status" value="1"/>
</dbReference>
<dbReference type="Gene3D" id="3.10.20.90">
    <property type="entry name" value="Phosphatidylinositol 3-kinase Catalytic Subunit, Chain A, domain 1"/>
    <property type="match status" value="1"/>
</dbReference>
<dbReference type="InterPro" id="IPR007239">
    <property type="entry name" value="Atg5"/>
</dbReference>
<dbReference type="InterPro" id="IPR048940">
    <property type="entry name" value="ATG5_HBR"/>
</dbReference>
<dbReference type="InterPro" id="IPR042526">
    <property type="entry name" value="Atg5_HR"/>
</dbReference>
<dbReference type="InterPro" id="IPR048939">
    <property type="entry name" value="ATG5_UblA"/>
</dbReference>
<dbReference type="InterPro" id="IPR042527">
    <property type="entry name" value="Atg5_UblA_dom_sf"/>
</dbReference>
<dbReference type="InterPro" id="IPR048318">
    <property type="entry name" value="ATG5_UblB"/>
</dbReference>
<dbReference type="PANTHER" id="PTHR13040">
    <property type="entry name" value="AUTOPHAGY PROTEIN 5"/>
    <property type="match status" value="1"/>
</dbReference>
<dbReference type="PANTHER" id="PTHR13040:SF2">
    <property type="entry name" value="AUTOPHAGY PROTEIN 5"/>
    <property type="match status" value="1"/>
</dbReference>
<dbReference type="Pfam" id="PF20637">
    <property type="entry name" value="ATG5_HBR"/>
    <property type="match status" value="1"/>
</dbReference>
<dbReference type="Pfam" id="PF20638">
    <property type="entry name" value="ATG5_UblA"/>
    <property type="match status" value="1"/>
</dbReference>
<dbReference type="Pfam" id="PF04106">
    <property type="entry name" value="ATG5_UblB"/>
    <property type="match status" value="1"/>
</dbReference>
<keyword id="KW-0072">Autophagy</keyword>
<keyword id="KW-0963">Cytoplasm</keyword>
<keyword id="KW-1017">Isopeptide bond</keyword>
<keyword id="KW-0611">Plant defense</keyword>
<keyword id="KW-0653">Protein transport</keyword>
<keyword id="KW-1185">Reference proteome</keyword>
<keyword id="KW-0346">Stress response</keyword>
<keyword id="KW-0813">Transport</keyword>
<keyword id="KW-0832">Ubl conjugation</keyword>
<organism>
    <name type="scientific">Arabidopsis thaliana</name>
    <name type="common">Mouse-ear cress</name>
    <dbReference type="NCBI Taxonomy" id="3702"/>
    <lineage>
        <taxon>Eukaryota</taxon>
        <taxon>Viridiplantae</taxon>
        <taxon>Streptophyta</taxon>
        <taxon>Embryophyta</taxon>
        <taxon>Tracheophyta</taxon>
        <taxon>Spermatophyta</taxon>
        <taxon>Magnoliopsida</taxon>
        <taxon>eudicotyledons</taxon>
        <taxon>Gunneridae</taxon>
        <taxon>Pentapetalae</taxon>
        <taxon>rosids</taxon>
        <taxon>malvids</taxon>
        <taxon>Brassicales</taxon>
        <taxon>Brassicaceae</taxon>
        <taxon>Camelineae</taxon>
        <taxon>Arabidopsis</taxon>
    </lineage>
</organism>
<proteinExistence type="evidence at transcript level"/>
<accession>Q9FFI2</accession>
<sequence length="337" mass="38477">MAKEAVKYVWEGAIPLQIHLHKSDVASHPAPPPALVLAPRIGYLPLLIPLIKPYFKDSLPPGEDSIWFDYKGFPLKWYIPTGVLFDLLCAEPERPWNLTIHFRGYPCNILIPCEGEDSVKWNFVNSLKEAQYIINGNCKNVMNMSQSDQEDLWTSVMNGDLDAYTRLSPKLKMGTVEDEFSRKTSLSSPQSQQVVPETEVAGQVKTARIPVRLYVRSLNKDFENLEDVPEIDTWDDISYLNRPVEFLKEEGKCFTLRDAIKSLLPEFMGDRAQTSGEERSIDDTEEADGSREMGEIKLVRIQGIEMKLEIPFSWVVNNLMNPEFYLHISVLVKAPQR</sequence>